<accession>A0RJF2</accession>
<organism>
    <name type="scientific">Bacillus thuringiensis (strain Al Hakam)</name>
    <dbReference type="NCBI Taxonomy" id="412694"/>
    <lineage>
        <taxon>Bacteria</taxon>
        <taxon>Bacillati</taxon>
        <taxon>Bacillota</taxon>
        <taxon>Bacilli</taxon>
        <taxon>Bacillales</taxon>
        <taxon>Bacillaceae</taxon>
        <taxon>Bacillus</taxon>
        <taxon>Bacillus cereus group</taxon>
    </lineage>
</organism>
<evidence type="ECO:0000255" key="1">
    <source>
        <dbReference type="HAMAP-Rule" id="MF_00092"/>
    </source>
</evidence>
<protein>
    <recommendedName>
        <fullName evidence="1">Endonuclease MutS2</fullName>
        <ecNumber evidence="1">3.1.-.-</ecNumber>
    </recommendedName>
    <alternativeName>
        <fullName evidence="1">Ribosome-associated protein quality control-upstream factor</fullName>
        <shortName evidence="1">RQC-upstream factor</shortName>
        <shortName evidence="1">RqcU</shortName>
        <ecNumber evidence="1">3.6.4.-</ecNumber>
    </alternativeName>
</protein>
<keyword id="KW-0067">ATP-binding</keyword>
<keyword id="KW-0238">DNA-binding</keyword>
<keyword id="KW-0255">Endonuclease</keyword>
<keyword id="KW-0378">Hydrolase</keyword>
<keyword id="KW-0540">Nuclease</keyword>
<keyword id="KW-0547">Nucleotide-binding</keyword>
<keyword id="KW-0694">RNA-binding</keyword>
<keyword id="KW-0699">rRNA-binding</keyword>
<comment type="function">
    <text evidence="1">Endonuclease that is involved in the suppression of homologous recombination and thus may have a key role in the control of bacterial genetic diversity.</text>
</comment>
<comment type="function">
    <text evidence="1">Acts as a ribosome collision sensor, splitting the ribosome into its 2 subunits. Detects stalled/collided 70S ribosomes which it binds and splits by an ATP-hydrolysis driven conformational change. Acts upstream of the ribosome quality control system (RQC), a ribosome-associated complex that mediates the extraction of incompletely synthesized nascent chains from stalled ribosomes and their subsequent degradation. Probably generates substrates for RQC.</text>
</comment>
<comment type="subunit">
    <text evidence="1">Homodimer. Binds to stalled ribosomes, contacting rRNA.</text>
</comment>
<comment type="similarity">
    <text evidence="1">Belongs to the DNA mismatch repair MutS family. MutS2 subfamily.</text>
</comment>
<name>MUTS2_BACAH</name>
<feature type="chain" id="PRO_1000075466" description="Endonuclease MutS2">
    <location>
        <begin position="1"/>
        <end position="786"/>
    </location>
</feature>
<feature type="domain" description="Smr" evidence="1">
    <location>
        <begin position="711"/>
        <end position="786"/>
    </location>
</feature>
<feature type="binding site" evidence="1">
    <location>
        <begin position="335"/>
        <end position="342"/>
    </location>
    <ligand>
        <name>ATP</name>
        <dbReference type="ChEBI" id="CHEBI:30616"/>
    </ligand>
</feature>
<dbReference type="EC" id="3.1.-.-" evidence="1"/>
<dbReference type="EC" id="3.6.4.-" evidence="1"/>
<dbReference type="EMBL" id="CP000485">
    <property type="protein sequence ID" value="ABK87345.1"/>
    <property type="molecule type" value="Genomic_DNA"/>
</dbReference>
<dbReference type="RefSeq" id="WP_000893726.1">
    <property type="nucleotide sequence ID" value="NC_008600.1"/>
</dbReference>
<dbReference type="SMR" id="A0RJF2"/>
<dbReference type="KEGG" id="btl:BALH_4135"/>
<dbReference type="HOGENOM" id="CLU_011252_2_1_9"/>
<dbReference type="GO" id="GO:0005524">
    <property type="term" value="F:ATP binding"/>
    <property type="evidence" value="ECO:0007669"/>
    <property type="project" value="UniProtKB-UniRule"/>
</dbReference>
<dbReference type="GO" id="GO:0016887">
    <property type="term" value="F:ATP hydrolysis activity"/>
    <property type="evidence" value="ECO:0007669"/>
    <property type="project" value="InterPro"/>
</dbReference>
<dbReference type="GO" id="GO:0140664">
    <property type="term" value="F:ATP-dependent DNA damage sensor activity"/>
    <property type="evidence" value="ECO:0007669"/>
    <property type="project" value="InterPro"/>
</dbReference>
<dbReference type="GO" id="GO:0004519">
    <property type="term" value="F:endonuclease activity"/>
    <property type="evidence" value="ECO:0007669"/>
    <property type="project" value="UniProtKB-UniRule"/>
</dbReference>
<dbReference type="GO" id="GO:0030983">
    <property type="term" value="F:mismatched DNA binding"/>
    <property type="evidence" value="ECO:0007669"/>
    <property type="project" value="InterPro"/>
</dbReference>
<dbReference type="GO" id="GO:0043023">
    <property type="term" value="F:ribosomal large subunit binding"/>
    <property type="evidence" value="ECO:0007669"/>
    <property type="project" value="UniProtKB-UniRule"/>
</dbReference>
<dbReference type="GO" id="GO:0019843">
    <property type="term" value="F:rRNA binding"/>
    <property type="evidence" value="ECO:0007669"/>
    <property type="project" value="UniProtKB-UniRule"/>
</dbReference>
<dbReference type="GO" id="GO:0006298">
    <property type="term" value="P:mismatch repair"/>
    <property type="evidence" value="ECO:0007669"/>
    <property type="project" value="InterPro"/>
</dbReference>
<dbReference type="GO" id="GO:0045910">
    <property type="term" value="P:negative regulation of DNA recombination"/>
    <property type="evidence" value="ECO:0007669"/>
    <property type="project" value="InterPro"/>
</dbReference>
<dbReference type="GO" id="GO:0072344">
    <property type="term" value="P:rescue of stalled ribosome"/>
    <property type="evidence" value="ECO:0007669"/>
    <property type="project" value="UniProtKB-UniRule"/>
</dbReference>
<dbReference type="CDD" id="cd03280">
    <property type="entry name" value="ABC_MutS2"/>
    <property type="match status" value="1"/>
</dbReference>
<dbReference type="CDD" id="cd06503">
    <property type="entry name" value="ATP-synt_Fo_b"/>
    <property type="match status" value="1"/>
</dbReference>
<dbReference type="FunFam" id="3.40.50.300:FF:000830">
    <property type="entry name" value="Endonuclease MutS2"/>
    <property type="match status" value="1"/>
</dbReference>
<dbReference type="Gene3D" id="1.10.1420.10">
    <property type="match status" value="2"/>
</dbReference>
<dbReference type="Gene3D" id="3.30.1370.110">
    <property type="match status" value="1"/>
</dbReference>
<dbReference type="Gene3D" id="3.40.50.300">
    <property type="entry name" value="P-loop containing nucleotide triphosphate hydrolases"/>
    <property type="match status" value="1"/>
</dbReference>
<dbReference type="HAMAP" id="MF_00092">
    <property type="entry name" value="MutS2"/>
    <property type="match status" value="1"/>
</dbReference>
<dbReference type="InterPro" id="IPR000432">
    <property type="entry name" value="DNA_mismatch_repair_MutS_C"/>
</dbReference>
<dbReference type="InterPro" id="IPR007696">
    <property type="entry name" value="DNA_mismatch_repair_MutS_core"/>
</dbReference>
<dbReference type="InterPro" id="IPR036187">
    <property type="entry name" value="DNA_mismatch_repair_MutS_sf"/>
</dbReference>
<dbReference type="InterPro" id="IPR046893">
    <property type="entry name" value="MSSS"/>
</dbReference>
<dbReference type="InterPro" id="IPR045076">
    <property type="entry name" value="MutS"/>
</dbReference>
<dbReference type="InterPro" id="IPR005747">
    <property type="entry name" value="MutS2"/>
</dbReference>
<dbReference type="InterPro" id="IPR027417">
    <property type="entry name" value="P-loop_NTPase"/>
</dbReference>
<dbReference type="InterPro" id="IPR002625">
    <property type="entry name" value="Smr_dom"/>
</dbReference>
<dbReference type="InterPro" id="IPR036063">
    <property type="entry name" value="Smr_dom_sf"/>
</dbReference>
<dbReference type="NCBIfam" id="TIGR01069">
    <property type="entry name" value="mutS2"/>
    <property type="match status" value="1"/>
</dbReference>
<dbReference type="PANTHER" id="PTHR48466:SF2">
    <property type="entry name" value="OS10G0509000 PROTEIN"/>
    <property type="match status" value="1"/>
</dbReference>
<dbReference type="PANTHER" id="PTHR48466">
    <property type="entry name" value="OS10G0509000 PROTEIN-RELATED"/>
    <property type="match status" value="1"/>
</dbReference>
<dbReference type="Pfam" id="PF20297">
    <property type="entry name" value="MSSS"/>
    <property type="match status" value="1"/>
</dbReference>
<dbReference type="Pfam" id="PF00488">
    <property type="entry name" value="MutS_V"/>
    <property type="match status" value="1"/>
</dbReference>
<dbReference type="Pfam" id="PF01713">
    <property type="entry name" value="Smr"/>
    <property type="match status" value="1"/>
</dbReference>
<dbReference type="PIRSF" id="PIRSF005814">
    <property type="entry name" value="MutS_YshD"/>
    <property type="match status" value="1"/>
</dbReference>
<dbReference type="SMART" id="SM00534">
    <property type="entry name" value="MUTSac"/>
    <property type="match status" value="1"/>
</dbReference>
<dbReference type="SMART" id="SM00533">
    <property type="entry name" value="MUTSd"/>
    <property type="match status" value="1"/>
</dbReference>
<dbReference type="SMART" id="SM00463">
    <property type="entry name" value="SMR"/>
    <property type="match status" value="1"/>
</dbReference>
<dbReference type="SUPFAM" id="SSF48334">
    <property type="entry name" value="DNA repair protein MutS, domain III"/>
    <property type="match status" value="1"/>
</dbReference>
<dbReference type="SUPFAM" id="SSF52540">
    <property type="entry name" value="P-loop containing nucleoside triphosphate hydrolases"/>
    <property type="match status" value="1"/>
</dbReference>
<dbReference type="SUPFAM" id="SSF160443">
    <property type="entry name" value="SMR domain-like"/>
    <property type="match status" value="1"/>
</dbReference>
<dbReference type="PROSITE" id="PS00486">
    <property type="entry name" value="DNA_MISMATCH_REPAIR_2"/>
    <property type="match status" value="1"/>
</dbReference>
<dbReference type="PROSITE" id="PS50828">
    <property type="entry name" value="SMR"/>
    <property type="match status" value="1"/>
</dbReference>
<gene>
    <name evidence="1" type="primary">mutS2</name>
    <name evidence="1" type="synonym">rqcU</name>
    <name type="ordered locus">BALH_4135</name>
</gene>
<sequence>MLERTLRVLEYNKVKEQLLEHTASSLGRDKVKHLVPSTDFEEIVEMQDTTDEAAKVIRLKGSAPLGGITDIRSNVKRAKIGSMLSPNELLDIANTMYGSRNMKRFIEDMVDNGVELPILETHVAQIVSLYDLEKKITNCIGDGGEVVDSASDKLRGIRTQIRTAESRIREKLENMTRSSNAQKMLSDSIVTIRNERYVIPVKQEYRGVYGGIVHDQSASGQTLFIEPQVIVELNNALQEARVKEKQEIERILLMLTEEVAVEADIVLSNVEVVANLDFIFAKAFYAKRIKATKPIVNNERYMDLRQARHPLIDPEIIVPNNIMLGKDFTTIVITGPNTGGKTVTLKTVGICVLMAQSGLHIPVMDESEICVFKNIFADIGDEQSIEQSLSTFSSHMVNIVDILEKADFESLVLFDELGAGTDPQEGAALAISILDEVCNRGARVVATTHYPELKAYGYNREQVINASVEFDVNTLSPTYKLLIGVPGRSNAFEISKRLGLSDRVIDQARNHISTDTNKIENMIAKLEESQKNAERDWNEAEALRKQSEKLHRELQRQIIEFNEERDERLLKAQKEGEEKVEAAKKEAEGIIQELRQLRKAQLANVKDHELIEAKSRLEGAAPELVKKQKVNVKNTAPKQQLRAGDEVKVLTFGQKGQLLEKVSDTEWSVQIGILKMKVKESNMEYINTPKQTEKKAVATVKGRDYHVSLELDLRGERFENAMARVEKYLDDAQLASYPRVSIIHGKGTGALRQGVQDYLKKHRGVKTFRYGDMGEGGLGVTVVELK</sequence>
<reference key="1">
    <citation type="journal article" date="2007" name="J. Bacteriol.">
        <title>The complete genome sequence of Bacillus thuringiensis Al Hakam.</title>
        <authorList>
            <person name="Challacombe J.F."/>
            <person name="Altherr M.R."/>
            <person name="Xie G."/>
            <person name="Bhotika S.S."/>
            <person name="Brown N."/>
            <person name="Bruce D."/>
            <person name="Campbell C.S."/>
            <person name="Campbell M.L."/>
            <person name="Chen J."/>
            <person name="Chertkov O."/>
            <person name="Cleland C."/>
            <person name="Dimitrijevic M."/>
            <person name="Doggett N.A."/>
            <person name="Fawcett J.J."/>
            <person name="Glavina T."/>
            <person name="Goodwin L.A."/>
            <person name="Green L.D."/>
            <person name="Han C.S."/>
            <person name="Hill K.K."/>
            <person name="Hitchcock P."/>
            <person name="Jackson P.J."/>
            <person name="Keim P."/>
            <person name="Kewalramani A.R."/>
            <person name="Longmire J."/>
            <person name="Lucas S."/>
            <person name="Malfatti S."/>
            <person name="Martinez D."/>
            <person name="McMurry K."/>
            <person name="Meincke L.J."/>
            <person name="Misra M."/>
            <person name="Moseman B.L."/>
            <person name="Mundt M."/>
            <person name="Munk A.C."/>
            <person name="Okinaka R.T."/>
            <person name="Parson-Quintana B."/>
            <person name="Reilly L.P."/>
            <person name="Richardson P."/>
            <person name="Robinson D.L."/>
            <person name="Saunders E."/>
            <person name="Tapia R."/>
            <person name="Tesmer J.G."/>
            <person name="Thayer N."/>
            <person name="Thompson L.S."/>
            <person name="Tice H."/>
            <person name="Ticknor L.O."/>
            <person name="Wills P.L."/>
            <person name="Gilna P."/>
            <person name="Brettin T.S."/>
        </authorList>
    </citation>
    <scope>NUCLEOTIDE SEQUENCE [LARGE SCALE GENOMIC DNA]</scope>
    <source>
        <strain>Al Hakam</strain>
    </source>
</reference>
<proteinExistence type="inferred from homology"/>